<accession>Q4R8T1</accession>
<keyword id="KW-0106">Calcium</keyword>
<keyword id="KW-0966">Cell projection</keyword>
<keyword id="KW-0969">Cilium</keyword>
<keyword id="KW-0963">Cytoplasm</keyword>
<keyword id="KW-0206">Cytoskeleton</keyword>
<keyword id="KW-0282">Flagellum</keyword>
<keyword id="KW-0539">Nucleus</keyword>
<keyword id="KW-0597">Phosphoprotein</keyword>
<keyword id="KW-1185">Reference proteome</keyword>
<keyword id="KW-0677">Repeat</keyword>
<keyword id="KW-0678">Repressor</keyword>
<keyword id="KW-0804">Transcription</keyword>
<keyword id="KW-0805">Transcription regulation</keyword>
<reference key="1">
    <citation type="submission" date="2005-06" db="EMBL/GenBank/DDBJ databases">
        <title>DNA sequences of macaque genes expressed in brain or testis and its evolutionary implications.</title>
        <authorList>
            <consortium name="International consortium for macaque cDNA sequencing and analysis"/>
        </authorList>
    </citation>
    <scope>NUCLEOTIDE SEQUENCE [LARGE SCALE MRNA]</scope>
    <source>
        <tissue>Testis</tissue>
    </source>
</reference>
<sequence>FLETDNEGNGILRRRDIKNALYGFDIPLTPREFEKLWASYDTEGKGHITYQEFLQKLGVNYSPAVHRPCAEDYFNFMGHFTKPQQLQEEMKELQQSTEKAVAARDKLVDCYQDISKAFTKIDKSKTNYISICKMQKVLEECGCSLTEGELTNLLNSWGVSRHDNSINYLDFLRAVENSKSTGAQPKEKEESMPINFATLNPQEVVRKIQEVVESSQLALSTAFSALDKEDTGFVKSTEFGQVLKDFCHKLTDNQYHYFLRKLRIHLTPYINWKYFLQNFSCFLEETAEEWAEKMPKGPPPTSPKAMASRDILARLHKAVTSHYHAITQEFENFDTMKTNTISREEFRAVCNRNVQILTDEQFDRLWNEMPVNAKGRLKYPDFLSRFSSERAATPTATGDSAAAQRGSSVPDVSEGIRSALSLPNQELRPGSKPQSHPCTAASTTAIPGTPPLQNCDPIESRLRKRIQGCWRQLLKECKEKDVARQGDISASEFLALVEKFNLDISKEECQQLIIKYDLKNNGKFAYCDFIQSCVLLLKAKESSLMQRMKIQNAHKMKDSGAETSSFYSALLRIQPKIVHCWRPMRRTFKSYDEAGTGLLSVADFRTVLRQYSINLSEEEFFHILEYYDKTLSSNISYNDFLRAFLQ</sequence>
<gene>
    <name type="primary">EFCAB6</name>
    <name type="synonym">DJBP</name>
    <name type="ORF">QtsA-11542</name>
</gene>
<organism>
    <name type="scientific">Macaca fascicularis</name>
    <name type="common">Crab-eating macaque</name>
    <name type="synonym">Cynomolgus monkey</name>
    <dbReference type="NCBI Taxonomy" id="9541"/>
    <lineage>
        <taxon>Eukaryota</taxon>
        <taxon>Metazoa</taxon>
        <taxon>Chordata</taxon>
        <taxon>Craniata</taxon>
        <taxon>Vertebrata</taxon>
        <taxon>Euteleostomi</taxon>
        <taxon>Mammalia</taxon>
        <taxon>Eutheria</taxon>
        <taxon>Euarchontoglires</taxon>
        <taxon>Primates</taxon>
        <taxon>Haplorrhini</taxon>
        <taxon>Catarrhini</taxon>
        <taxon>Cercopithecidae</taxon>
        <taxon>Cercopithecinae</taxon>
        <taxon>Macaca</taxon>
    </lineage>
</organism>
<name>EFCB6_MACFA</name>
<proteinExistence type="evidence at transcript level"/>
<dbReference type="EMBL" id="AB168367">
    <property type="protein sequence ID" value="BAE00490.1"/>
    <property type="status" value="ALT_INIT"/>
    <property type="molecule type" value="mRNA"/>
</dbReference>
<dbReference type="SMR" id="Q4R8T1"/>
<dbReference type="STRING" id="9541.ENSMFAP00000031649"/>
<dbReference type="eggNOG" id="KOG0027">
    <property type="taxonomic scope" value="Eukaryota"/>
</dbReference>
<dbReference type="Proteomes" id="UP000233100">
    <property type="component" value="Unplaced"/>
</dbReference>
<dbReference type="GO" id="GO:0005737">
    <property type="term" value="C:cytoplasm"/>
    <property type="evidence" value="ECO:0007669"/>
    <property type="project" value="UniProtKB-KW"/>
</dbReference>
<dbReference type="GO" id="GO:0005856">
    <property type="term" value="C:cytoskeleton"/>
    <property type="evidence" value="ECO:0007669"/>
    <property type="project" value="UniProtKB-KW"/>
</dbReference>
<dbReference type="GO" id="GO:0005654">
    <property type="term" value="C:nucleoplasm"/>
    <property type="evidence" value="ECO:0007669"/>
    <property type="project" value="TreeGrafter"/>
</dbReference>
<dbReference type="GO" id="GO:0036126">
    <property type="term" value="C:sperm flagellum"/>
    <property type="evidence" value="ECO:0000250"/>
    <property type="project" value="UniProtKB"/>
</dbReference>
<dbReference type="GO" id="GO:0005509">
    <property type="term" value="F:calcium ion binding"/>
    <property type="evidence" value="ECO:0007669"/>
    <property type="project" value="InterPro"/>
</dbReference>
<dbReference type="GO" id="GO:0030317">
    <property type="term" value="P:flagellated sperm motility"/>
    <property type="evidence" value="ECO:0000250"/>
    <property type="project" value="UniProtKB"/>
</dbReference>
<dbReference type="FunFam" id="1.10.238.10:FF:000243">
    <property type="entry name" value="EF-hand calcium binding domain 6"/>
    <property type="match status" value="1"/>
</dbReference>
<dbReference type="FunFam" id="1.10.238.10:FF:000179">
    <property type="entry name" value="EF-hand calcium-binding domain-containing protein 6"/>
    <property type="match status" value="1"/>
</dbReference>
<dbReference type="FunFam" id="1.10.238.10:FF:000240">
    <property type="entry name" value="EF-hand calcium-binding domain-containing protein 6"/>
    <property type="match status" value="1"/>
</dbReference>
<dbReference type="FunFam" id="1.10.238.10:FF:000285">
    <property type="entry name" value="EF-hand calcium-binding domain-containing protein 6"/>
    <property type="match status" value="1"/>
</dbReference>
<dbReference type="FunFam" id="1.10.238.10:FF:000538">
    <property type="entry name" value="EF-hand calcium-binding domain-containing protein 6"/>
    <property type="match status" value="1"/>
</dbReference>
<dbReference type="Gene3D" id="1.10.238.10">
    <property type="entry name" value="EF-hand"/>
    <property type="match status" value="5"/>
</dbReference>
<dbReference type="InterPro" id="IPR011992">
    <property type="entry name" value="EF-hand-dom_pair"/>
</dbReference>
<dbReference type="InterPro" id="IPR015070">
    <property type="entry name" value="EF_hand_DJBP"/>
</dbReference>
<dbReference type="InterPro" id="IPR002048">
    <property type="entry name" value="EF_hand_dom"/>
</dbReference>
<dbReference type="InterPro" id="IPR052603">
    <property type="entry name" value="EFCB6"/>
</dbReference>
<dbReference type="PANTHER" id="PTHR20875:SF2">
    <property type="entry name" value="EF-HAND CALCIUM-BINDING DOMAIN-CONTAINING PROTEIN 6"/>
    <property type="match status" value="1"/>
</dbReference>
<dbReference type="PANTHER" id="PTHR20875">
    <property type="entry name" value="EF-HAND CALCIUM-BINDING DOMAIN-CONTAINING PROTEIN 6-RELATED"/>
    <property type="match status" value="1"/>
</dbReference>
<dbReference type="Pfam" id="PF08976">
    <property type="entry name" value="EF-hand_11"/>
    <property type="match status" value="1"/>
</dbReference>
<dbReference type="Pfam" id="PF13499">
    <property type="entry name" value="EF-hand_7"/>
    <property type="match status" value="1"/>
</dbReference>
<dbReference type="SMART" id="SM00054">
    <property type="entry name" value="EFh"/>
    <property type="match status" value="6"/>
</dbReference>
<dbReference type="SUPFAM" id="SSF47473">
    <property type="entry name" value="EF-hand"/>
    <property type="match status" value="4"/>
</dbReference>
<dbReference type="PROSITE" id="PS50222">
    <property type="entry name" value="EF_HAND_2"/>
    <property type="match status" value="10"/>
</dbReference>
<evidence type="ECO:0000250" key="1"/>
<evidence type="ECO:0000250" key="2">
    <source>
        <dbReference type="UniProtKB" id="Q5THR3"/>
    </source>
</evidence>
<evidence type="ECO:0000250" key="3">
    <source>
        <dbReference type="UniProtKB" id="Q6P1E8"/>
    </source>
</evidence>
<evidence type="ECO:0000255" key="4">
    <source>
        <dbReference type="PROSITE-ProRule" id="PRU00448"/>
    </source>
</evidence>
<evidence type="ECO:0000256" key="5">
    <source>
        <dbReference type="SAM" id="MobiDB-lite"/>
    </source>
</evidence>
<evidence type="ECO:0000305" key="6"/>
<protein>
    <recommendedName>
        <fullName>EF-hand calcium-binding domain-containing protein 6</fullName>
    </recommendedName>
    <alternativeName>
        <fullName>DJ-1-binding protein</fullName>
        <shortName>DJBP</shortName>
    </alternativeName>
</protein>
<comment type="function">
    <text evidence="2 3">Negatively regulates the androgen receptor by recruiting histone deacetylase complex, and protein DJ-1 antagonizes this inhibition by abrogation of this complex. Microtubule inner protein (MIP) part of the dynein-decorated doublet microtubules (DMTs) in cilia axoneme, which is required for motile cilia beating.</text>
</comment>
<comment type="subunit">
    <text evidence="2 3">Microtubule inner protein component of sperm flagellar doublet microtubules (By similarity). Binds PARK7. Part of a ternary complex containing PARK7, EFCAB6/DJBP and AR (By similarity).</text>
</comment>
<comment type="subcellular location">
    <subcellularLocation>
        <location evidence="2">Nucleus</location>
    </subcellularLocation>
    <subcellularLocation>
        <location evidence="3">Cytoplasm</location>
        <location evidence="3">Cytoskeleton</location>
        <location evidence="3">Flagellum axoneme</location>
    </subcellularLocation>
</comment>
<comment type="sequence caution" evidence="6">
    <conflict type="erroneous initiation">
        <sequence resource="EMBL-CDS" id="BAE00490"/>
    </conflict>
    <text>Truncated N-terminus.</text>
</comment>
<feature type="chain" id="PRO_0000246025" description="EF-hand calcium-binding domain-containing protein 6">
    <location>
        <begin position="1" status="less than"/>
        <end position="646"/>
    </location>
</feature>
<feature type="domain" description="EF-hand 1" evidence="4">
    <location>
        <begin position="1" status="less than"/>
        <end position="27"/>
    </location>
</feature>
<feature type="domain" description="EF-hand 2" evidence="4">
    <location>
        <begin position="28"/>
        <end position="63"/>
    </location>
</feature>
<feature type="domain" description="EF-hand 3" evidence="4">
    <location>
        <begin position="109"/>
        <end position="144"/>
    </location>
</feature>
<feature type="domain" description="EF-hand 4" evidence="4">
    <location>
        <begin position="214"/>
        <end position="249"/>
    </location>
</feature>
<feature type="domain" description="EF-hand 5" evidence="4">
    <location>
        <begin position="321"/>
        <end position="356"/>
    </location>
</feature>
<feature type="domain" description="EF-hand 6" evidence="4">
    <location>
        <begin position="357"/>
        <end position="392"/>
    </location>
</feature>
<feature type="domain" description="EF-hand 7" evidence="4">
    <location>
        <begin position="468"/>
        <end position="503"/>
    </location>
</feature>
<feature type="domain" description="EF-hand 8" evidence="4">
    <location>
        <begin position="504"/>
        <end position="539"/>
    </location>
</feature>
<feature type="domain" description="EF-hand 9" evidence="4">
    <location>
        <begin position="579"/>
        <end position="614"/>
    </location>
</feature>
<feature type="domain" description="EF-hand 10" evidence="4">
    <location>
        <begin position="615"/>
        <end position="646"/>
    </location>
</feature>
<feature type="region of interest" description="Disordered" evidence="5">
    <location>
        <begin position="390"/>
        <end position="452"/>
    </location>
</feature>
<feature type="region of interest" description="Interaction with PARK7" evidence="1">
    <location>
        <begin position="448"/>
        <end position="646"/>
    </location>
</feature>
<feature type="region of interest" description="Interaction with AR" evidence="1">
    <location>
        <begin position="552"/>
        <end position="646"/>
    </location>
</feature>
<feature type="compositionally biased region" description="Polar residues" evidence="5">
    <location>
        <begin position="432"/>
        <end position="446"/>
    </location>
</feature>
<feature type="modified residue" description="Phosphothreonine" evidence="3">
    <location>
        <position position="29"/>
    </location>
</feature>
<feature type="modified residue" description="Phosphoserine" evidence="3">
    <location>
        <position position="435"/>
    </location>
</feature>
<feature type="modified residue" description="Phosphothreonine" evidence="3">
    <location>
        <position position="439"/>
    </location>
</feature>
<feature type="modified residue" description="Phosphothreonine" evidence="3">
    <location>
        <position position="449"/>
    </location>
</feature>
<feature type="non-terminal residue">
    <location>
        <position position="1"/>
    </location>
</feature>